<keyword id="KW-0002">3D-structure</keyword>
<keyword id="KW-0225">Disease variant</keyword>
<keyword id="KW-1015">Disulfide bond</keyword>
<keyword id="KW-0325">Glycoprotein</keyword>
<keyword id="KW-1183">Host cell receptor for virus entry</keyword>
<keyword id="KW-0945">Host-virus interaction</keyword>
<keyword id="KW-0472">Membrane</keyword>
<keyword id="KW-1267">Proteomics identification</keyword>
<keyword id="KW-0675">Receptor</keyword>
<keyword id="KW-1185">Reference proteome</keyword>
<keyword id="KW-0677">Repeat</keyword>
<keyword id="KW-0732">Signal</keyword>
<keyword id="KW-0812">Transmembrane</keyword>
<keyword id="KW-1133">Transmembrane helix</keyword>
<comment type="function">
    <text evidence="7">Receptor for TNFSF4/OX40L/GP34. Is a costimulatory molecule implicated in long-term T-cell immunity.</text>
</comment>
<comment type="function">
    <text evidence="5">(Microbial infection) Acts as a receptor for human herpesvirus 6B/HHV-6B.</text>
</comment>
<comment type="subunit">
    <text evidence="4 8 9">Interacts with TRAF2, TRAF3 and TRAF5.</text>
</comment>
<comment type="subunit">
    <text evidence="5">(Microbial infection) Interacts with Human herpesvirus 6B/HHV-6B gQ1:gQ2 proteins.</text>
</comment>
<comment type="interaction">
    <interactant intactId="EBI-15596193">
        <id>P43489</id>
    </interactant>
    <interactant intactId="EBI-11724451">
        <id>P23510</id>
        <label>TNFSF4</label>
    </interactant>
    <organismsDiffer>false</organismsDiffer>
    <experiments>2</experiments>
</comment>
<comment type="subcellular location">
    <subcellularLocation>
        <location>Membrane</location>
        <topology>Single-pass type I membrane protein</topology>
    </subcellularLocation>
</comment>
<comment type="disease" evidence="6">
    <disease id="DI-04001">
        <name>Immunodeficiency 16</name>
        <acronym>IMD16</acronym>
        <description>An autosomal recessive primary immunodeficiency associated with classic Kaposi sarcoma of childhood and poor T-cell recall immune responses due to complete functional OX40 deficiency.</description>
        <dbReference type="MIM" id="615593"/>
    </disease>
    <text>The disease is caused by variants affecting the gene represented in this entry.</text>
</comment>
<comment type="sequence caution" evidence="11">
    <conflict type="erroneous initiation">
        <sequence resource="EMBL-CDS" id="AAB33944"/>
    </conflict>
    <text>Truncated N-terminus.</text>
</comment>
<sequence>MCVGARRLGRGPCAALLLLGLGLSTVTGLHCVGDTYPSNDRCCHECRPGNGMVSRCSRSQNTVCRPCGPGFYNDVVSSKPCKPCTWCNLRSGSERKQLCTATQDTVCRCRAGTQPLDSYKPGVDCAPCPPGHFSPGDNQACKPWTNCTLAGKHTLQPASNSSDAICEDRDPPATQPQETQGPPARPITVQPTEAWPRTSQGPSTRPVEVPGGRAVAAILGLGLVLGLLGPLAILLALYLLRRDQRLPPDAHKPPGGGSFRTPIQEEQADAHSTLAKI</sequence>
<evidence type="ECO:0000255" key="1"/>
<evidence type="ECO:0000255" key="2">
    <source>
        <dbReference type="PROSITE-ProRule" id="PRU00206"/>
    </source>
</evidence>
<evidence type="ECO:0000256" key="3">
    <source>
        <dbReference type="SAM" id="MobiDB-lite"/>
    </source>
</evidence>
<evidence type="ECO:0000269" key="4">
    <source>
    </source>
</evidence>
<evidence type="ECO:0000269" key="5">
    <source>
    </source>
</evidence>
<evidence type="ECO:0000269" key="6">
    <source>
    </source>
</evidence>
<evidence type="ECO:0000269" key="7">
    <source>
    </source>
</evidence>
<evidence type="ECO:0000269" key="8">
    <source>
    </source>
</evidence>
<evidence type="ECO:0000269" key="9">
    <source>
    </source>
</evidence>
<evidence type="ECO:0000269" key="10">
    <source ref="4"/>
</evidence>
<evidence type="ECO:0000305" key="11"/>
<evidence type="ECO:0007829" key="12">
    <source>
        <dbReference type="PDB" id="2HEV"/>
    </source>
</evidence>
<evidence type="ECO:0007829" key="13">
    <source>
        <dbReference type="PDB" id="2HEY"/>
    </source>
</evidence>
<evidence type="ECO:0007829" key="14">
    <source>
        <dbReference type="PDB" id="6OGX"/>
    </source>
</evidence>
<evidence type="ECO:0007829" key="15">
    <source>
        <dbReference type="PDB" id="6OKM"/>
    </source>
</evidence>
<evidence type="ECO:0007829" key="16">
    <source>
        <dbReference type="PDB" id="7YK4"/>
    </source>
</evidence>
<organism>
    <name type="scientific">Homo sapiens</name>
    <name type="common">Human</name>
    <dbReference type="NCBI Taxonomy" id="9606"/>
    <lineage>
        <taxon>Eukaryota</taxon>
        <taxon>Metazoa</taxon>
        <taxon>Chordata</taxon>
        <taxon>Craniata</taxon>
        <taxon>Vertebrata</taxon>
        <taxon>Euteleostomi</taxon>
        <taxon>Mammalia</taxon>
        <taxon>Eutheria</taxon>
        <taxon>Euarchontoglires</taxon>
        <taxon>Primates</taxon>
        <taxon>Haplorrhini</taxon>
        <taxon>Catarrhini</taxon>
        <taxon>Hominidae</taxon>
        <taxon>Homo</taxon>
    </lineage>
</organism>
<accession>P43489</accession>
<accession>Q13663</accession>
<accession>Q2M312</accession>
<accession>Q5T7M0</accession>
<proteinExistence type="evidence at protein level"/>
<dbReference type="EMBL" id="X75962">
    <property type="protein sequence ID" value="CAA53576.1"/>
    <property type="molecule type" value="mRNA"/>
</dbReference>
<dbReference type="EMBL" id="S76792">
    <property type="protein sequence ID" value="AAB33944.1"/>
    <property type="status" value="ALT_INIT"/>
    <property type="molecule type" value="mRNA"/>
</dbReference>
<dbReference type="EMBL" id="AJ277151">
    <property type="protein sequence ID" value="CAB96543.1"/>
    <property type="molecule type" value="Genomic_DNA"/>
</dbReference>
<dbReference type="EMBL" id="DQ118974">
    <property type="protein sequence ID" value="AAZ15374.1"/>
    <property type="molecule type" value="Genomic_DNA"/>
</dbReference>
<dbReference type="EMBL" id="AL162741">
    <property type="status" value="NOT_ANNOTATED_CDS"/>
    <property type="molecule type" value="Genomic_DNA"/>
</dbReference>
<dbReference type="EMBL" id="BC105070">
    <property type="protein sequence ID" value="AAI05071.1"/>
    <property type="molecule type" value="mRNA"/>
</dbReference>
<dbReference type="EMBL" id="BC105072">
    <property type="protein sequence ID" value="AAI05073.1"/>
    <property type="molecule type" value="mRNA"/>
</dbReference>
<dbReference type="CCDS" id="CCDS11.1"/>
<dbReference type="PIR" id="I37552">
    <property type="entry name" value="I37552"/>
</dbReference>
<dbReference type="RefSeq" id="NP_003318.1">
    <property type="nucleotide sequence ID" value="NM_003327.4"/>
</dbReference>
<dbReference type="RefSeq" id="XP_016857721.1">
    <property type="nucleotide sequence ID" value="XM_017002232.1"/>
</dbReference>
<dbReference type="PDB" id="1D0A">
    <property type="method" value="X-ray"/>
    <property type="resolution" value="2.00 A"/>
    <property type="chains" value="G/H/I/J/K/L=262-266"/>
</dbReference>
<dbReference type="PDB" id="2HEV">
    <property type="method" value="X-ray"/>
    <property type="resolution" value="2.41 A"/>
    <property type="chains" value="R=29-170"/>
</dbReference>
<dbReference type="PDB" id="2HEY">
    <property type="method" value="X-ray"/>
    <property type="resolution" value="2.00 A"/>
    <property type="chains" value="R/T=29-170"/>
</dbReference>
<dbReference type="PDB" id="6OGX">
    <property type="method" value="X-ray"/>
    <property type="resolution" value="2.77 A"/>
    <property type="chains" value="G=29-170"/>
</dbReference>
<dbReference type="PDB" id="6OKM">
    <property type="method" value="X-ray"/>
    <property type="resolution" value="2.10 A"/>
    <property type="chains" value="R=29-170"/>
</dbReference>
<dbReference type="PDB" id="6OKN">
    <property type="method" value="X-ray"/>
    <property type="resolution" value="3.25 A"/>
    <property type="chains" value="E/R=29-170"/>
</dbReference>
<dbReference type="PDB" id="7YK4">
    <property type="method" value="X-ray"/>
    <property type="resolution" value="2.70 A"/>
    <property type="chains" value="A/B=29-170"/>
</dbReference>
<dbReference type="PDB" id="8AG1">
    <property type="method" value="X-ray"/>
    <property type="resolution" value="3.30 A"/>
    <property type="chains" value="A/a=29-170"/>
</dbReference>
<dbReference type="PDBsum" id="1D0A"/>
<dbReference type="PDBsum" id="2HEV"/>
<dbReference type="PDBsum" id="2HEY"/>
<dbReference type="PDBsum" id="6OGX"/>
<dbReference type="PDBsum" id="6OKM"/>
<dbReference type="PDBsum" id="6OKN"/>
<dbReference type="PDBsum" id="7YK4"/>
<dbReference type="PDBsum" id="8AG1"/>
<dbReference type="SMR" id="P43489"/>
<dbReference type="BioGRID" id="113144">
    <property type="interactions" value="8"/>
</dbReference>
<dbReference type="DIP" id="DIP-3024N"/>
<dbReference type="ELM" id="P43489"/>
<dbReference type="FunCoup" id="P43489">
    <property type="interactions" value="359"/>
</dbReference>
<dbReference type="IntAct" id="P43489">
    <property type="interactions" value="2"/>
</dbReference>
<dbReference type="STRING" id="9606.ENSP00000368538"/>
<dbReference type="ChEMBL" id="CHEMBL3989383"/>
<dbReference type="DrugBank" id="DB18809">
    <property type="generic name" value="Rocatinlimab"/>
</dbReference>
<dbReference type="GuidetoPHARMACOLOGY" id="1873"/>
<dbReference type="GlyCosmos" id="P43489">
    <property type="glycosylation" value="3 sites, 1 glycan"/>
</dbReference>
<dbReference type="GlyGen" id="P43489">
    <property type="glycosylation" value="3 sites, 1 O-linked glycan (1 site)"/>
</dbReference>
<dbReference type="iPTMnet" id="P43489"/>
<dbReference type="PhosphoSitePlus" id="P43489"/>
<dbReference type="BioMuta" id="TNFRSF4"/>
<dbReference type="DMDM" id="1171933"/>
<dbReference type="MassIVE" id="P43489"/>
<dbReference type="PaxDb" id="9606-ENSP00000368538"/>
<dbReference type="PeptideAtlas" id="P43489"/>
<dbReference type="ProteomicsDB" id="55637"/>
<dbReference type="ABCD" id="P43489">
    <property type="antibodies" value="69 sequenced antibodies"/>
</dbReference>
<dbReference type="Antibodypedia" id="4246">
    <property type="antibodies" value="1205 antibodies from 43 providers"/>
</dbReference>
<dbReference type="DNASU" id="7293"/>
<dbReference type="Ensembl" id="ENST00000379236.4">
    <property type="protein sequence ID" value="ENSP00000368538.3"/>
    <property type="gene ID" value="ENSG00000186827.12"/>
</dbReference>
<dbReference type="GeneID" id="7293"/>
<dbReference type="KEGG" id="hsa:7293"/>
<dbReference type="MANE-Select" id="ENST00000379236.4">
    <property type="protein sequence ID" value="ENSP00000368538.3"/>
    <property type="RefSeq nucleotide sequence ID" value="NM_003327.4"/>
    <property type="RefSeq protein sequence ID" value="NP_003318.1"/>
</dbReference>
<dbReference type="UCSC" id="uc001ade.4">
    <property type="organism name" value="human"/>
</dbReference>
<dbReference type="AGR" id="HGNC:11918"/>
<dbReference type="CTD" id="7293"/>
<dbReference type="DisGeNET" id="7293"/>
<dbReference type="GeneCards" id="TNFRSF4"/>
<dbReference type="HGNC" id="HGNC:11918">
    <property type="gene designation" value="TNFRSF4"/>
</dbReference>
<dbReference type="HPA" id="ENSG00000186827">
    <property type="expression patterns" value="Tissue enhanced (heart muscle, lymphoid tissue)"/>
</dbReference>
<dbReference type="MalaCards" id="TNFRSF4"/>
<dbReference type="MIM" id="600315">
    <property type="type" value="gene"/>
</dbReference>
<dbReference type="MIM" id="615593">
    <property type="type" value="phenotype"/>
</dbReference>
<dbReference type="neXtProt" id="NX_P43489"/>
<dbReference type="OpenTargets" id="ENSG00000186827"/>
<dbReference type="Orphanet" id="431149">
    <property type="disease" value="Combined immunodeficiency due to OX40 deficiency"/>
</dbReference>
<dbReference type="PharmGKB" id="PA36611"/>
<dbReference type="VEuPathDB" id="HostDB:ENSG00000186827"/>
<dbReference type="eggNOG" id="ENOG502SB1F">
    <property type="taxonomic scope" value="Eukaryota"/>
</dbReference>
<dbReference type="GeneTree" id="ENSGT00730000111452"/>
<dbReference type="HOGENOM" id="CLU_092451_0_0_1"/>
<dbReference type="InParanoid" id="P43489"/>
<dbReference type="OMA" id="MVSRCSR"/>
<dbReference type="OrthoDB" id="9950067at2759"/>
<dbReference type="PAN-GO" id="P43489">
    <property type="GO annotations" value="3 GO annotations based on evolutionary models"/>
</dbReference>
<dbReference type="PhylomeDB" id="P43489"/>
<dbReference type="TreeFam" id="TF330135"/>
<dbReference type="PathwayCommons" id="P43489"/>
<dbReference type="Reactome" id="R-HSA-5669034">
    <property type="pathway name" value="TNFs bind their physiological receptors"/>
</dbReference>
<dbReference type="SignaLink" id="P43489"/>
<dbReference type="SIGNOR" id="P43489"/>
<dbReference type="BioGRID-ORCS" id="7293">
    <property type="hits" value="10 hits in 1157 CRISPR screens"/>
</dbReference>
<dbReference type="EvolutionaryTrace" id="P43489"/>
<dbReference type="GeneWiki" id="CD134"/>
<dbReference type="GenomeRNAi" id="7293"/>
<dbReference type="Pharos" id="P43489">
    <property type="development level" value="Tchem"/>
</dbReference>
<dbReference type="PRO" id="PR:P43489"/>
<dbReference type="Proteomes" id="UP000005640">
    <property type="component" value="Chromosome 1"/>
</dbReference>
<dbReference type="RNAct" id="P43489">
    <property type="molecule type" value="protein"/>
</dbReference>
<dbReference type="Bgee" id="ENSG00000186827">
    <property type="expression patterns" value="Expressed in apex of heart and 93 other cell types or tissues"/>
</dbReference>
<dbReference type="GO" id="GO:0009986">
    <property type="term" value="C:cell surface"/>
    <property type="evidence" value="ECO:0000250"/>
    <property type="project" value="BHF-UCL"/>
</dbReference>
<dbReference type="GO" id="GO:0009897">
    <property type="term" value="C:external side of plasma membrane"/>
    <property type="evidence" value="ECO:0000318"/>
    <property type="project" value="GO_Central"/>
</dbReference>
<dbReference type="GO" id="GO:0005886">
    <property type="term" value="C:plasma membrane"/>
    <property type="evidence" value="ECO:0000304"/>
    <property type="project" value="Reactome"/>
</dbReference>
<dbReference type="GO" id="GO:0005031">
    <property type="term" value="F:tumor necrosis factor receptor activity"/>
    <property type="evidence" value="ECO:0000318"/>
    <property type="project" value="GO_Central"/>
</dbReference>
<dbReference type="GO" id="GO:0001618">
    <property type="term" value="F:virus receptor activity"/>
    <property type="evidence" value="ECO:0007669"/>
    <property type="project" value="UniProtKB-KW"/>
</dbReference>
<dbReference type="GO" id="GO:0006955">
    <property type="term" value="P:immune response"/>
    <property type="evidence" value="ECO:0000304"/>
    <property type="project" value="ProtInc"/>
</dbReference>
<dbReference type="GO" id="GO:0006954">
    <property type="term" value="P:inflammatory response"/>
    <property type="evidence" value="ECO:0000318"/>
    <property type="project" value="GO_Central"/>
</dbReference>
<dbReference type="GO" id="GO:0043433">
    <property type="term" value="P:negative regulation of DNA-binding transcription factor activity"/>
    <property type="evidence" value="ECO:0000250"/>
    <property type="project" value="BHF-UCL"/>
</dbReference>
<dbReference type="GO" id="GO:0045892">
    <property type="term" value="P:negative regulation of DNA-templated transcription"/>
    <property type="evidence" value="ECO:0000250"/>
    <property type="project" value="BHF-UCL"/>
</dbReference>
<dbReference type="GO" id="GO:0030890">
    <property type="term" value="P:positive regulation of B cell proliferation"/>
    <property type="evidence" value="ECO:0000250"/>
    <property type="project" value="BHF-UCL"/>
</dbReference>
<dbReference type="GO" id="GO:0002639">
    <property type="term" value="P:positive regulation of immunoglobulin production"/>
    <property type="evidence" value="ECO:0000250"/>
    <property type="project" value="BHF-UCL"/>
</dbReference>
<dbReference type="GO" id="GO:0042098">
    <property type="term" value="P:T cell proliferation"/>
    <property type="evidence" value="ECO:0000250"/>
    <property type="project" value="BHF-UCL"/>
</dbReference>
<dbReference type="CDD" id="cd13406">
    <property type="entry name" value="TNFRSF4"/>
    <property type="match status" value="1"/>
</dbReference>
<dbReference type="FunFam" id="2.10.50.10:FF:000026">
    <property type="entry name" value="Tumor necrosis factor receptor superfamily member 4"/>
    <property type="match status" value="1"/>
</dbReference>
<dbReference type="FunFam" id="2.10.50.10:FF:000038">
    <property type="entry name" value="Tumor necrosis factor receptor superfamily member 4"/>
    <property type="match status" value="1"/>
</dbReference>
<dbReference type="Gene3D" id="2.10.50.10">
    <property type="entry name" value="Tumor Necrosis Factor Receptor, subunit A, domain 2"/>
    <property type="match status" value="2"/>
</dbReference>
<dbReference type="InterPro" id="IPR001368">
    <property type="entry name" value="TNFR/NGFR_Cys_rich_reg"/>
</dbReference>
<dbReference type="InterPro" id="IPR020445">
    <property type="entry name" value="TNFR_4"/>
</dbReference>
<dbReference type="InterPro" id="IPR034022">
    <property type="entry name" value="TNFRSF4_N"/>
</dbReference>
<dbReference type="PANTHER" id="PTHR47881">
    <property type="entry name" value="TUMOR NECROSIS FACTOR RECEPTOR SUBFAMILY MEMBER 4"/>
    <property type="match status" value="1"/>
</dbReference>
<dbReference type="PANTHER" id="PTHR47881:SF1">
    <property type="entry name" value="TUMOR NECROSIS FACTOR RECEPTOR SUPERFAMILY MEMBER 4"/>
    <property type="match status" value="1"/>
</dbReference>
<dbReference type="Pfam" id="PF00020">
    <property type="entry name" value="TNFR_c6"/>
    <property type="match status" value="2"/>
</dbReference>
<dbReference type="PRINTS" id="PR01921">
    <property type="entry name" value="TNFACTORR4"/>
</dbReference>
<dbReference type="SMART" id="SM01411">
    <property type="entry name" value="Ephrin_rec_like"/>
    <property type="match status" value="2"/>
</dbReference>
<dbReference type="SMART" id="SM00208">
    <property type="entry name" value="TNFR"/>
    <property type="match status" value="3"/>
</dbReference>
<dbReference type="SUPFAM" id="SSF57586">
    <property type="entry name" value="TNF receptor-like"/>
    <property type="match status" value="3"/>
</dbReference>
<dbReference type="PROSITE" id="PS00652">
    <property type="entry name" value="TNFR_NGFR_1"/>
    <property type="match status" value="2"/>
</dbReference>
<dbReference type="PROSITE" id="PS50050">
    <property type="entry name" value="TNFR_NGFR_2"/>
    <property type="match status" value="2"/>
</dbReference>
<name>TNR4_HUMAN</name>
<feature type="signal peptide" evidence="1">
    <location>
        <begin position="1"/>
        <end position="28"/>
    </location>
</feature>
<feature type="chain" id="PRO_0000034554" description="Tumor necrosis factor receptor superfamily member 4">
    <location>
        <begin position="29"/>
        <end position="277"/>
    </location>
</feature>
<feature type="topological domain" description="Extracellular" evidence="1">
    <location>
        <begin position="29"/>
        <end position="214"/>
    </location>
</feature>
<feature type="transmembrane region" description="Helical" evidence="1">
    <location>
        <begin position="215"/>
        <end position="235"/>
    </location>
</feature>
<feature type="topological domain" description="Cytoplasmic" evidence="1">
    <location>
        <begin position="236"/>
        <end position="277"/>
    </location>
</feature>
<feature type="repeat" description="TNFR-Cys 1">
    <location>
        <begin position="30"/>
        <end position="65"/>
    </location>
</feature>
<feature type="repeat" description="TNFR-Cys 2">
    <location>
        <begin position="66"/>
        <end position="107"/>
    </location>
</feature>
<feature type="repeat" description="TNFR-Cys 3; truncated">
    <location>
        <begin position="108"/>
        <end position="126"/>
    </location>
</feature>
<feature type="repeat" description="TNFR-Cys 4">
    <location>
        <begin position="127"/>
        <end position="167"/>
    </location>
</feature>
<feature type="region of interest" description="Disordered" evidence="3">
    <location>
        <begin position="158"/>
        <end position="209"/>
    </location>
</feature>
<feature type="region of interest" description="Disordered" evidence="3">
    <location>
        <begin position="248"/>
        <end position="277"/>
    </location>
</feature>
<feature type="glycosylation site" description="N-linked (GlcNAc...) asparagine" evidence="1">
    <location>
        <position position="146"/>
    </location>
</feature>
<feature type="glycosylation site" description="N-linked (GlcNAc...) asparagine" evidence="1">
    <location>
        <position position="160"/>
    </location>
</feature>
<feature type="disulfide bond" evidence="2 4">
    <location>
        <begin position="31"/>
        <end position="42"/>
    </location>
</feature>
<feature type="disulfide bond" evidence="2 4">
    <location>
        <begin position="43"/>
        <end position="56"/>
    </location>
</feature>
<feature type="disulfide bond" evidence="2 4">
    <location>
        <begin position="46"/>
        <end position="64"/>
    </location>
</feature>
<feature type="disulfide bond" evidence="2 4">
    <location>
        <begin position="67"/>
        <end position="81"/>
    </location>
</feature>
<feature type="disulfide bond" evidence="2 4">
    <location>
        <begin position="84"/>
        <end position="99"/>
    </location>
</feature>
<feature type="disulfide bond" evidence="2 4">
    <location>
        <begin position="87"/>
        <end position="107"/>
    </location>
</feature>
<feature type="disulfide bond" evidence="2 4">
    <location>
        <begin position="109"/>
        <end position="125"/>
    </location>
</feature>
<feature type="disulfide bond" evidence="2 4">
    <location>
        <begin position="128"/>
        <end position="141"/>
    </location>
</feature>
<feature type="disulfide bond" evidence="2">
    <location>
        <begin position="147"/>
        <end position="166"/>
    </location>
</feature>
<feature type="sequence variant" id="VAR_025164" description="In dbSNP:rs35304565." evidence="10">
    <original>R</original>
    <variation>C</variation>
    <location>
        <position position="10"/>
    </location>
</feature>
<feature type="sequence variant" id="VAR_070942" description="In IMD16; dbSNP:rs587777075." evidence="6">
    <original>R</original>
    <variation>C</variation>
    <location>
        <position position="65"/>
    </location>
</feature>
<feature type="strand" evidence="13">
    <location>
        <begin position="33"/>
        <end position="38"/>
    </location>
</feature>
<feature type="strand" evidence="13">
    <location>
        <begin position="41"/>
        <end position="44"/>
    </location>
</feature>
<feature type="strand" evidence="13">
    <location>
        <begin position="50"/>
        <end position="54"/>
    </location>
</feature>
<feature type="strand" evidence="15">
    <location>
        <begin position="58"/>
        <end position="60"/>
    </location>
</feature>
<feature type="strand" evidence="13">
    <location>
        <begin position="63"/>
        <end position="66"/>
    </location>
</feature>
<feature type="strand" evidence="13">
    <location>
        <begin position="77"/>
        <end position="79"/>
    </location>
</feature>
<feature type="helix" evidence="13">
    <location>
        <begin position="89"/>
        <end position="91"/>
    </location>
</feature>
<feature type="strand" evidence="13">
    <location>
        <begin position="93"/>
        <end position="97"/>
    </location>
</feature>
<feature type="strand" evidence="14">
    <location>
        <begin position="101"/>
        <end position="103"/>
    </location>
</feature>
<feature type="strand" evidence="13">
    <location>
        <begin position="106"/>
        <end position="109"/>
    </location>
</feature>
<feature type="strand" evidence="13">
    <location>
        <begin position="113"/>
        <end position="116"/>
    </location>
</feature>
<feature type="strand" evidence="13">
    <location>
        <begin position="118"/>
        <end position="120"/>
    </location>
</feature>
<feature type="strand" evidence="13">
    <location>
        <begin position="123"/>
        <end position="127"/>
    </location>
</feature>
<feature type="strand" evidence="16">
    <location>
        <begin position="136"/>
        <end position="138"/>
    </location>
</feature>
<feature type="turn" evidence="13">
    <location>
        <begin position="147"/>
        <end position="151"/>
    </location>
</feature>
<feature type="strand" evidence="12">
    <location>
        <begin position="153"/>
        <end position="156"/>
    </location>
</feature>
<feature type="strand" evidence="13">
    <location>
        <begin position="160"/>
        <end position="162"/>
    </location>
</feature>
<feature type="strand" evidence="12">
    <location>
        <begin position="165"/>
        <end position="167"/>
    </location>
</feature>
<gene>
    <name type="primary">TNFRSF4</name>
    <name type="synonym">TXGP1L</name>
</gene>
<reference key="1">
    <citation type="journal article" date="1994" name="Eur. J. Immunol.">
        <title>The human OX40 homolog: cDNA structure, expression and chromosomal assignment of the ACT35 antigen.</title>
        <authorList>
            <person name="Latza U."/>
            <person name="Duerkop H."/>
            <person name="Schnittger S."/>
            <person name="Ringeling J."/>
            <person name="Eitelbach F."/>
            <person name="Hummel M."/>
            <person name="Fonatsch C."/>
            <person name="Stein H."/>
        </authorList>
    </citation>
    <scope>NUCLEOTIDE SEQUENCE [MRNA]</scope>
</reference>
<reference key="2">
    <citation type="journal article" date="1994" name="Circ. Shock">
        <title>Identification of OX40 ligand and preliminary characterization of its activities on OX40 receptor.</title>
        <authorList>
            <person name="Baum P.R."/>
            <person name="Gayle R.B. III"/>
            <person name="Ramsdell F."/>
            <person name="Srinivasan S."/>
            <person name="Sorensen R.A."/>
            <person name="Watson M.L."/>
            <person name="Seldin M.F."/>
            <person name="Clifford K.N."/>
            <person name="Grabstein K."/>
            <person name="Alderson M.R."/>
        </authorList>
    </citation>
    <scope>NUCLEOTIDE SEQUENCE [MRNA]</scope>
    <scope>FUNCTION</scope>
</reference>
<reference key="3">
    <citation type="journal article" date="2000" name="J. Immunol.">
        <title>The HTLV-I protein transcriptionally modulates OX40 antigen expression.</title>
        <authorList>
            <person name="Pankow R."/>
            <person name="Duerkop H."/>
            <person name="Latza U."/>
            <person name="Krause H."/>
            <person name="Kunzendorf U."/>
            <person name="Pohl T."/>
            <person name="Bulfone-Paus S."/>
        </authorList>
    </citation>
    <scope>NUCLEOTIDE SEQUENCE [GENOMIC DNA]</scope>
</reference>
<reference key="4">
    <citation type="submission" date="2005-07" db="EMBL/GenBank/DDBJ databases">
        <authorList>
            <consortium name="NIEHS SNPs program"/>
        </authorList>
    </citation>
    <scope>NUCLEOTIDE SEQUENCE [GENOMIC DNA]</scope>
    <scope>VARIANT CYS-10</scope>
</reference>
<reference key="5">
    <citation type="journal article" date="2006" name="Nature">
        <title>The DNA sequence and biological annotation of human chromosome 1.</title>
        <authorList>
            <person name="Gregory S.G."/>
            <person name="Barlow K.F."/>
            <person name="McLay K.E."/>
            <person name="Kaul R."/>
            <person name="Swarbreck D."/>
            <person name="Dunham A."/>
            <person name="Scott C.E."/>
            <person name="Howe K.L."/>
            <person name="Woodfine K."/>
            <person name="Spencer C.C.A."/>
            <person name="Jones M.C."/>
            <person name="Gillson C."/>
            <person name="Searle S."/>
            <person name="Zhou Y."/>
            <person name="Kokocinski F."/>
            <person name="McDonald L."/>
            <person name="Evans R."/>
            <person name="Phillips K."/>
            <person name="Atkinson A."/>
            <person name="Cooper R."/>
            <person name="Jones C."/>
            <person name="Hall R.E."/>
            <person name="Andrews T.D."/>
            <person name="Lloyd C."/>
            <person name="Ainscough R."/>
            <person name="Almeida J.P."/>
            <person name="Ambrose K.D."/>
            <person name="Anderson F."/>
            <person name="Andrew R.W."/>
            <person name="Ashwell R.I.S."/>
            <person name="Aubin K."/>
            <person name="Babbage A.K."/>
            <person name="Bagguley C.L."/>
            <person name="Bailey J."/>
            <person name="Beasley H."/>
            <person name="Bethel G."/>
            <person name="Bird C.P."/>
            <person name="Bray-Allen S."/>
            <person name="Brown J.Y."/>
            <person name="Brown A.J."/>
            <person name="Buckley D."/>
            <person name="Burton J."/>
            <person name="Bye J."/>
            <person name="Carder C."/>
            <person name="Chapman J.C."/>
            <person name="Clark S.Y."/>
            <person name="Clarke G."/>
            <person name="Clee C."/>
            <person name="Cobley V."/>
            <person name="Collier R.E."/>
            <person name="Corby N."/>
            <person name="Coville G.J."/>
            <person name="Davies J."/>
            <person name="Deadman R."/>
            <person name="Dunn M."/>
            <person name="Earthrowl M."/>
            <person name="Ellington A.G."/>
            <person name="Errington H."/>
            <person name="Frankish A."/>
            <person name="Frankland J."/>
            <person name="French L."/>
            <person name="Garner P."/>
            <person name="Garnett J."/>
            <person name="Gay L."/>
            <person name="Ghori M.R.J."/>
            <person name="Gibson R."/>
            <person name="Gilby L.M."/>
            <person name="Gillett W."/>
            <person name="Glithero R.J."/>
            <person name="Grafham D.V."/>
            <person name="Griffiths C."/>
            <person name="Griffiths-Jones S."/>
            <person name="Grocock R."/>
            <person name="Hammond S."/>
            <person name="Harrison E.S.I."/>
            <person name="Hart E."/>
            <person name="Haugen E."/>
            <person name="Heath P.D."/>
            <person name="Holmes S."/>
            <person name="Holt K."/>
            <person name="Howden P.J."/>
            <person name="Hunt A.R."/>
            <person name="Hunt S.E."/>
            <person name="Hunter G."/>
            <person name="Isherwood J."/>
            <person name="James R."/>
            <person name="Johnson C."/>
            <person name="Johnson D."/>
            <person name="Joy A."/>
            <person name="Kay M."/>
            <person name="Kershaw J.K."/>
            <person name="Kibukawa M."/>
            <person name="Kimberley A.M."/>
            <person name="King A."/>
            <person name="Knights A.J."/>
            <person name="Lad H."/>
            <person name="Laird G."/>
            <person name="Lawlor S."/>
            <person name="Leongamornlert D.A."/>
            <person name="Lloyd D.M."/>
            <person name="Loveland J."/>
            <person name="Lovell J."/>
            <person name="Lush M.J."/>
            <person name="Lyne R."/>
            <person name="Martin S."/>
            <person name="Mashreghi-Mohammadi M."/>
            <person name="Matthews L."/>
            <person name="Matthews N.S.W."/>
            <person name="McLaren S."/>
            <person name="Milne S."/>
            <person name="Mistry S."/>
            <person name="Moore M.J.F."/>
            <person name="Nickerson T."/>
            <person name="O'Dell C.N."/>
            <person name="Oliver K."/>
            <person name="Palmeiri A."/>
            <person name="Palmer S.A."/>
            <person name="Parker A."/>
            <person name="Patel D."/>
            <person name="Pearce A.V."/>
            <person name="Peck A.I."/>
            <person name="Pelan S."/>
            <person name="Phelps K."/>
            <person name="Phillimore B.J."/>
            <person name="Plumb R."/>
            <person name="Rajan J."/>
            <person name="Raymond C."/>
            <person name="Rouse G."/>
            <person name="Saenphimmachak C."/>
            <person name="Sehra H.K."/>
            <person name="Sheridan E."/>
            <person name="Shownkeen R."/>
            <person name="Sims S."/>
            <person name="Skuce C.D."/>
            <person name="Smith M."/>
            <person name="Steward C."/>
            <person name="Subramanian S."/>
            <person name="Sycamore N."/>
            <person name="Tracey A."/>
            <person name="Tromans A."/>
            <person name="Van Helmond Z."/>
            <person name="Wall M."/>
            <person name="Wallis J.M."/>
            <person name="White S."/>
            <person name="Whitehead S.L."/>
            <person name="Wilkinson J.E."/>
            <person name="Willey D.L."/>
            <person name="Williams H."/>
            <person name="Wilming L."/>
            <person name="Wray P.W."/>
            <person name="Wu Z."/>
            <person name="Coulson A."/>
            <person name="Vaudin M."/>
            <person name="Sulston J.E."/>
            <person name="Durbin R.M."/>
            <person name="Hubbard T."/>
            <person name="Wooster R."/>
            <person name="Dunham I."/>
            <person name="Carter N.P."/>
            <person name="McVean G."/>
            <person name="Ross M.T."/>
            <person name="Harrow J."/>
            <person name="Olson M.V."/>
            <person name="Beck S."/>
            <person name="Rogers J."/>
            <person name="Bentley D.R."/>
        </authorList>
    </citation>
    <scope>NUCLEOTIDE SEQUENCE [LARGE SCALE GENOMIC DNA]</scope>
</reference>
<reference key="6">
    <citation type="journal article" date="2004" name="Genome Res.">
        <title>The status, quality, and expansion of the NIH full-length cDNA project: the Mammalian Gene Collection (MGC).</title>
        <authorList>
            <consortium name="The MGC Project Team"/>
        </authorList>
    </citation>
    <scope>NUCLEOTIDE SEQUENCE [LARGE SCALE MRNA]</scope>
    <source>
        <tissue>Brain</tissue>
    </source>
</reference>
<reference key="7">
    <citation type="journal article" date="1998" name="Mol. Cell. Biol.">
        <title>4-1BB and Ox40 are members of a tumor necrosis factor (TNF)-nerve growth factor receptor subfamily that bind TNF receptor-associated factors and activate nuclear factor kappaB.</title>
        <authorList>
            <person name="Arch R.H."/>
            <person name="Thompson C.B."/>
        </authorList>
    </citation>
    <scope>INTERACTION WITH TRAF1; TRAF2 AND TRAF3</scope>
</reference>
<reference key="8">
    <citation type="journal article" date="1998" name="J. Biol. Chem.">
        <title>Activation of OX40 signal transduction pathways leads to tumor necrosis factor receptor-associated factor (TRAF) 2- and TRAF5-mediated NF-kappaB activation.</title>
        <authorList>
            <person name="Kawamata S."/>
            <person name="Hori T."/>
            <person name="Imura A."/>
            <person name="Takaori-Kondo A."/>
            <person name="Uchiyama T."/>
        </authorList>
    </citation>
    <scope>INTERACTION WITH TRAF2 AND TRAF5</scope>
</reference>
<reference key="9">
    <citation type="journal article" date="2013" name="Proc. Natl. Acad. Sci. U.S.A.">
        <title>CD134 is a cellular receptor specific for human herpesvirus-6B entry.</title>
        <authorList>
            <person name="Tang H."/>
            <person name="Serada S."/>
            <person name="Kawabata A."/>
            <person name="Ota M."/>
            <person name="Hayashi E."/>
            <person name="Naka T."/>
            <person name="Yamanishi K."/>
            <person name="Mori Y."/>
        </authorList>
    </citation>
    <scope>FUNCTION (MICROBIAL INFECTION)</scope>
    <scope>INTERACTION WITH HUMAN HERPESVIRUS-6B/HHV-6B GQ1:GQ2 PROTEINS</scope>
</reference>
<reference key="10">
    <citation type="journal article" date="2006" name="Structure">
        <title>The crystal structure of the costimulatory OX40-OX40L complex.</title>
        <authorList>
            <person name="Compaan D.M."/>
            <person name="Hymowitz S.G."/>
        </authorList>
    </citation>
    <scope>X-RAY CRYSTALLOGRAPHY (2.0 ANGSTROMS) OF 29-170 IN COMPLEX WITH TNFSF4</scope>
    <scope>DISULFIDE BONDS</scope>
</reference>
<reference key="11">
    <citation type="journal article" date="2013" name="J. Exp. Med.">
        <title>Inherited human OX40 deficiency underlying classic Kaposi sarcoma of childhood.</title>
        <authorList>
            <person name="Byun M."/>
            <person name="Ma C.S."/>
            <person name="Akcay A."/>
            <person name="Pedergnana V."/>
            <person name="Palendira U."/>
            <person name="Myoung J."/>
            <person name="Avery D.T."/>
            <person name="Liu Y."/>
            <person name="Abhyankar A."/>
            <person name="Lorenzo L."/>
            <person name="Schmidt M."/>
            <person name="Lim H.K."/>
            <person name="Cassar O."/>
            <person name="Migaud M."/>
            <person name="Rozenberg F."/>
            <person name="Canpolat N."/>
            <person name="Aydogan G."/>
            <person name="Fleckenstein B."/>
            <person name="Bustamante J."/>
            <person name="Picard C."/>
            <person name="Gessain A."/>
            <person name="Jouanguy E."/>
            <person name="Cesarman E."/>
            <person name="Olivier M."/>
            <person name="Gros P."/>
            <person name="Abel L."/>
            <person name="Croft M."/>
            <person name="Tangye S.G."/>
            <person name="Casanova J.L."/>
        </authorList>
    </citation>
    <scope>VARIANT IMD16 CYS-65</scope>
</reference>
<protein>
    <recommendedName>
        <fullName>Tumor necrosis factor receptor superfamily member 4</fullName>
    </recommendedName>
    <alternativeName>
        <fullName>ACT35 antigen</fullName>
    </alternativeName>
    <alternativeName>
        <fullName>OX40L receptor</fullName>
    </alternativeName>
    <alternativeName>
        <fullName>TAX transcriptionally-activated glycoprotein 1 receptor</fullName>
    </alternativeName>
    <cdAntigenName>CD134</cdAntigenName>
</protein>